<protein>
    <recommendedName>
        <fullName>NXPE family member 3</fullName>
    </recommendedName>
    <alternativeName>
        <fullName>Protein FAM55C</fullName>
    </alternativeName>
</protein>
<keyword id="KW-0325">Glycoprotein</keyword>
<keyword id="KW-1185">Reference proteome</keyword>
<keyword id="KW-0964">Secreted</keyword>
<keyword id="KW-0732">Signal</keyword>
<dbReference type="EMBL" id="BC124635">
    <property type="protein sequence ID" value="AAI24636.1"/>
    <property type="molecule type" value="mRNA"/>
</dbReference>
<dbReference type="RefSeq" id="NP_001070849.1">
    <property type="nucleotide sequence ID" value="NM_001077381.1"/>
</dbReference>
<dbReference type="FunCoup" id="Q08BN9">
    <property type="interactions" value="1974"/>
</dbReference>
<dbReference type="GlyCosmos" id="Q08BN9">
    <property type="glycosylation" value="5 sites, No reported glycans"/>
</dbReference>
<dbReference type="PaxDb" id="7955-ENSDARP00000119028"/>
<dbReference type="GeneID" id="564277"/>
<dbReference type="KEGG" id="dre:564277"/>
<dbReference type="AGR" id="ZFIN:ZDB-GENE-061013-214"/>
<dbReference type="CTD" id="91775"/>
<dbReference type="ZFIN" id="ZDB-GENE-061013-214">
    <property type="gene designation" value="nxpe3"/>
</dbReference>
<dbReference type="eggNOG" id="ENOG502QUD6">
    <property type="taxonomic scope" value="Eukaryota"/>
</dbReference>
<dbReference type="InParanoid" id="Q08BN9"/>
<dbReference type="OrthoDB" id="5950832at2759"/>
<dbReference type="PhylomeDB" id="Q08BN9"/>
<dbReference type="PRO" id="PR:Q08BN9"/>
<dbReference type="Proteomes" id="UP000000437">
    <property type="component" value="Chromosome 9"/>
</dbReference>
<dbReference type="GO" id="GO:0005576">
    <property type="term" value="C:extracellular region"/>
    <property type="evidence" value="ECO:0007669"/>
    <property type="project" value="UniProtKB-SubCell"/>
</dbReference>
<dbReference type="GO" id="GO:0007399">
    <property type="term" value="P:nervous system development"/>
    <property type="evidence" value="ECO:0007669"/>
    <property type="project" value="UniProtKB-ARBA"/>
</dbReference>
<dbReference type="InterPro" id="IPR014756">
    <property type="entry name" value="Ig_E-set"/>
</dbReference>
<dbReference type="InterPro" id="IPR057106">
    <property type="entry name" value="NXPE4_C"/>
</dbReference>
<dbReference type="InterPro" id="IPR026845">
    <property type="entry name" value="NXPH/NXPE"/>
</dbReference>
<dbReference type="PANTHER" id="PTHR16165">
    <property type="entry name" value="NXPE FAMILY MEMBER"/>
    <property type="match status" value="1"/>
</dbReference>
<dbReference type="PANTHER" id="PTHR16165:SF9">
    <property type="entry name" value="NXPE FAMILY MEMBER 3"/>
    <property type="match status" value="1"/>
</dbReference>
<dbReference type="Pfam" id="PF06312">
    <property type="entry name" value="Neurexophilin"/>
    <property type="match status" value="1"/>
</dbReference>
<dbReference type="Pfam" id="PF24536">
    <property type="entry name" value="NXPE4_C"/>
    <property type="match status" value="1"/>
</dbReference>
<dbReference type="SUPFAM" id="SSF81296">
    <property type="entry name" value="E set domains"/>
    <property type="match status" value="1"/>
</dbReference>
<accession>Q08BN9</accession>
<organism>
    <name type="scientific">Danio rerio</name>
    <name type="common">Zebrafish</name>
    <name type="synonym">Brachydanio rerio</name>
    <dbReference type="NCBI Taxonomy" id="7955"/>
    <lineage>
        <taxon>Eukaryota</taxon>
        <taxon>Metazoa</taxon>
        <taxon>Chordata</taxon>
        <taxon>Craniata</taxon>
        <taxon>Vertebrata</taxon>
        <taxon>Euteleostomi</taxon>
        <taxon>Actinopterygii</taxon>
        <taxon>Neopterygii</taxon>
        <taxon>Teleostei</taxon>
        <taxon>Ostariophysi</taxon>
        <taxon>Cypriniformes</taxon>
        <taxon>Danionidae</taxon>
        <taxon>Danioninae</taxon>
        <taxon>Danio</taxon>
    </lineage>
</organism>
<reference key="1">
    <citation type="submission" date="2006-10" db="EMBL/GenBank/DDBJ databases">
        <authorList>
            <consortium name="NIH - Zebrafish Gene Collection (ZGC) project"/>
        </authorList>
    </citation>
    <scope>NUCLEOTIDE SEQUENCE [LARGE SCALE MRNA]</scope>
    <source>
        <tissue>Ovary</tissue>
    </source>
</reference>
<name>NXPE3_DANRE</name>
<comment type="subcellular location">
    <subcellularLocation>
        <location evidence="2">Secreted</location>
    </subcellularLocation>
</comment>
<comment type="similarity">
    <text evidence="2">Belongs to the NXPE family.</text>
</comment>
<evidence type="ECO:0000255" key="1"/>
<evidence type="ECO:0000305" key="2"/>
<proteinExistence type="evidence at transcript level"/>
<sequence>MEKYFPKYVPFFSLLALSGLLYLLWSITSLESWNCQTVSTFYQLQNSIQSVLKTSELLLPTEFNYSFCAHLGQEPTLEEAREESYLLKSIAWPEPSTLGLPLRQSSDPAQSYYTIQDTGDLRVGGQLAVKVHMHNFLGQPKKHGGDFLVARLHTPELVAGVAGQVRDHNNGNYTIFFPLLWAGVAQVELTMIHSSEAVMVLKRLREEQSDRVFFKSLFRSGYISESTLCNPCLPLKPQPLCNYTDPQTGEPWYCYKPKMLDCDTRIDHSKGGYKKNLLTVYESQFFQSGVNIKVPIHSAGVDNVTVLPASKVRTKKMRLEFTPSGYYYQGSWRPLSGVVPRQFNTSSLINQCLRGKMLYMYGDSTVRQWYEYLITNVPEFKEFNFHSAKNVGPYMGVNMNYNALLKYRCHGPPIRFTSVSSAEMRYISNELDGLSGGSDTVVVISIWSHFSTYPVPVYIRRLRHIRKAVIRLLNREPTTLVFIRTGNLQKLDAESSLFNSDWFSQQLDTVLRAMFKGLNVQLVDAWEMTLAHHHPHQLHPQLDIVSNMVNFILSHICPVRKKKKRG</sequence>
<feature type="signal peptide" evidence="1">
    <location>
        <begin position="1"/>
        <end position="32"/>
    </location>
</feature>
<feature type="chain" id="PRO_0000297596" description="NXPE family member 3">
    <location>
        <begin position="33"/>
        <end position="566"/>
    </location>
</feature>
<feature type="glycosylation site" description="N-linked (GlcNAc...) asparagine" evidence="1">
    <location>
        <position position="64"/>
    </location>
</feature>
<feature type="glycosylation site" description="N-linked (GlcNAc...) asparagine" evidence="1">
    <location>
        <position position="172"/>
    </location>
</feature>
<feature type="glycosylation site" description="N-linked (GlcNAc...) asparagine" evidence="1">
    <location>
        <position position="242"/>
    </location>
</feature>
<feature type="glycosylation site" description="N-linked (GlcNAc...) asparagine" evidence="1">
    <location>
        <position position="303"/>
    </location>
</feature>
<feature type="glycosylation site" description="N-linked (GlcNAc...) asparagine" evidence="1">
    <location>
        <position position="344"/>
    </location>
</feature>
<gene>
    <name type="primary">nxpe3</name>
    <name type="synonym">fam55c</name>
    <name type="ORF">zgc:153086</name>
</gene>